<feature type="chain" id="PRO_1000133428" description="Isopentenyl-diphosphate delta-isomerase">
    <location>
        <begin position="1"/>
        <end position="349"/>
    </location>
</feature>
<feature type="binding site" evidence="1">
    <location>
        <begin position="6"/>
        <end position="7"/>
    </location>
    <ligand>
        <name>substrate</name>
    </ligand>
</feature>
<feature type="binding site" evidence="1">
    <location>
        <begin position="62"/>
        <end position="64"/>
    </location>
    <ligand>
        <name>FMN</name>
        <dbReference type="ChEBI" id="CHEBI:58210"/>
    </ligand>
</feature>
<feature type="binding site" evidence="1">
    <location>
        <position position="93"/>
    </location>
    <ligand>
        <name>FMN</name>
        <dbReference type="ChEBI" id="CHEBI:58210"/>
    </ligand>
</feature>
<feature type="binding site" evidence="1">
    <location>
        <position position="122"/>
    </location>
    <ligand>
        <name>FMN</name>
        <dbReference type="ChEBI" id="CHEBI:58210"/>
    </ligand>
</feature>
<feature type="binding site" evidence="1">
    <location>
        <position position="152"/>
    </location>
    <ligand>
        <name>substrate</name>
    </ligand>
</feature>
<feature type="binding site" evidence="1">
    <location>
        <position position="153"/>
    </location>
    <ligand>
        <name>Mg(2+)</name>
        <dbReference type="ChEBI" id="CHEBI:18420"/>
    </ligand>
</feature>
<feature type="binding site" evidence="1">
    <location>
        <position position="184"/>
    </location>
    <ligand>
        <name>FMN</name>
        <dbReference type="ChEBI" id="CHEBI:58210"/>
    </ligand>
</feature>
<feature type="binding site" evidence="1">
    <location>
        <position position="214"/>
    </location>
    <ligand>
        <name>FMN</name>
        <dbReference type="ChEBI" id="CHEBI:58210"/>
    </ligand>
</feature>
<feature type="binding site" evidence="1">
    <location>
        <begin position="258"/>
        <end position="259"/>
    </location>
    <ligand>
        <name>FMN</name>
        <dbReference type="ChEBI" id="CHEBI:58210"/>
    </ligand>
</feature>
<feature type="binding site" evidence="1">
    <location>
        <begin position="280"/>
        <end position="281"/>
    </location>
    <ligand>
        <name>FMN</name>
        <dbReference type="ChEBI" id="CHEBI:58210"/>
    </ligand>
</feature>
<gene>
    <name evidence="1" type="primary">fni</name>
    <name type="ordered locus">BCA_1558</name>
</gene>
<comment type="function">
    <text evidence="1">Involved in the biosynthesis of isoprenoids. Catalyzes the 1,3-allylic rearrangement of the homoallylic substrate isopentenyl (IPP) to its allylic isomer, dimethylallyl diphosphate (DMAPP).</text>
</comment>
<comment type="catalytic activity">
    <reaction evidence="1">
        <text>isopentenyl diphosphate = dimethylallyl diphosphate</text>
        <dbReference type="Rhea" id="RHEA:23284"/>
        <dbReference type="ChEBI" id="CHEBI:57623"/>
        <dbReference type="ChEBI" id="CHEBI:128769"/>
        <dbReference type="EC" id="5.3.3.2"/>
    </reaction>
</comment>
<comment type="cofactor">
    <cofactor evidence="1">
        <name>FMN</name>
        <dbReference type="ChEBI" id="CHEBI:58210"/>
    </cofactor>
</comment>
<comment type="cofactor">
    <cofactor evidence="1">
        <name>NADPH</name>
        <dbReference type="ChEBI" id="CHEBI:57783"/>
    </cofactor>
</comment>
<comment type="cofactor">
    <cofactor evidence="1">
        <name>Mg(2+)</name>
        <dbReference type="ChEBI" id="CHEBI:18420"/>
    </cofactor>
</comment>
<comment type="subunit">
    <text evidence="1">Homooctamer. Dimer of tetramers.</text>
</comment>
<comment type="subcellular location">
    <subcellularLocation>
        <location evidence="1">Cytoplasm</location>
    </subcellularLocation>
</comment>
<comment type="similarity">
    <text evidence="1">Belongs to the IPP isomerase type 2 family.</text>
</comment>
<organism>
    <name type="scientific">Bacillus cereus (strain 03BB102)</name>
    <dbReference type="NCBI Taxonomy" id="572264"/>
    <lineage>
        <taxon>Bacteria</taxon>
        <taxon>Bacillati</taxon>
        <taxon>Bacillota</taxon>
        <taxon>Bacilli</taxon>
        <taxon>Bacillales</taxon>
        <taxon>Bacillaceae</taxon>
        <taxon>Bacillus</taxon>
        <taxon>Bacillus cereus group</taxon>
    </lineage>
</organism>
<protein>
    <recommendedName>
        <fullName evidence="1">Isopentenyl-diphosphate delta-isomerase</fullName>
        <shortName evidence="1">IPP isomerase</shortName>
        <ecNumber evidence="1">5.3.3.2</ecNumber>
    </recommendedName>
    <alternativeName>
        <fullName evidence="1">Isopentenyl diphosphate:dimethylallyl diphosphate isomerase</fullName>
    </alternativeName>
    <alternativeName>
        <fullName evidence="1">Isopentenyl pyrophosphate isomerase</fullName>
    </alternativeName>
    <alternativeName>
        <fullName evidence="1">Type 2 isopentenyl diphosphate isomerase</fullName>
        <shortName evidence="1">IDI-2</shortName>
    </alternativeName>
</protein>
<keyword id="KW-0963">Cytoplasm</keyword>
<keyword id="KW-0285">Flavoprotein</keyword>
<keyword id="KW-0288">FMN</keyword>
<keyword id="KW-0413">Isomerase</keyword>
<keyword id="KW-0414">Isoprene biosynthesis</keyword>
<keyword id="KW-0460">Magnesium</keyword>
<keyword id="KW-0479">Metal-binding</keyword>
<keyword id="KW-0521">NADP</keyword>
<dbReference type="EC" id="5.3.3.2" evidence="1"/>
<dbReference type="EMBL" id="CP001407">
    <property type="protein sequence ID" value="ACO29025.1"/>
    <property type="molecule type" value="Genomic_DNA"/>
</dbReference>
<dbReference type="RefSeq" id="WP_000251055.1">
    <property type="nucleotide sequence ID" value="NZ_CP009318.1"/>
</dbReference>
<dbReference type="SMR" id="C1EMZ6"/>
<dbReference type="KEGG" id="bcx:BCA_1558"/>
<dbReference type="PATRIC" id="fig|572264.18.peg.1506"/>
<dbReference type="Proteomes" id="UP000002210">
    <property type="component" value="Chromosome"/>
</dbReference>
<dbReference type="GO" id="GO:0005737">
    <property type="term" value="C:cytoplasm"/>
    <property type="evidence" value="ECO:0007669"/>
    <property type="project" value="UniProtKB-SubCell"/>
</dbReference>
<dbReference type="GO" id="GO:0010181">
    <property type="term" value="F:FMN binding"/>
    <property type="evidence" value="ECO:0007669"/>
    <property type="project" value="UniProtKB-UniRule"/>
</dbReference>
<dbReference type="GO" id="GO:0004452">
    <property type="term" value="F:isopentenyl-diphosphate delta-isomerase activity"/>
    <property type="evidence" value="ECO:0007669"/>
    <property type="project" value="UniProtKB-UniRule"/>
</dbReference>
<dbReference type="GO" id="GO:0000287">
    <property type="term" value="F:magnesium ion binding"/>
    <property type="evidence" value="ECO:0007669"/>
    <property type="project" value="UniProtKB-UniRule"/>
</dbReference>
<dbReference type="GO" id="GO:0070402">
    <property type="term" value="F:NADPH binding"/>
    <property type="evidence" value="ECO:0007669"/>
    <property type="project" value="UniProtKB-UniRule"/>
</dbReference>
<dbReference type="GO" id="GO:0016491">
    <property type="term" value="F:oxidoreductase activity"/>
    <property type="evidence" value="ECO:0007669"/>
    <property type="project" value="InterPro"/>
</dbReference>
<dbReference type="GO" id="GO:0008299">
    <property type="term" value="P:isoprenoid biosynthetic process"/>
    <property type="evidence" value="ECO:0007669"/>
    <property type="project" value="UniProtKB-UniRule"/>
</dbReference>
<dbReference type="CDD" id="cd02811">
    <property type="entry name" value="IDI-2_FMN"/>
    <property type="match status" value="1"/>
</dbReference>
<dbReference type="FunFam" id="3.20.20.70:FF:000115">
    <property type="entry name" value="Isopentenyl-diphosphate delta-isomerase"/>
    <property type="match status" value="1"/>
</dbReference>
<dbReference type="Gene3D" id="3.20.20.70">
    <property type="entry name" value="Aldolase class I"/>
    <property type="match status" value="1"/>
</dbReference>
<dbReference type="HAMAP" id="MF_00354">
    <property type="entry name" value="Idi_2"/>
    <property type="match status" value="1"/>
</dbReference>
<dbReference type="InterPro" id="IPR013785">
    <property type="entry name" value="Aldolase_TIM"/>
</dbReference>
<dbReference type="InterPro" id="IPR000262">
    <property type="entry name" value="FMN-dep_DH"/>
</dbReference>
<dbReference type="InterPro" id="IPR011179">
    <property type="entry name" value="IPdP_isomerase"/>
</dbReference>
<dbReference type="NCBIfam" id="TIGR02151">
    <property type="entry name" value="IPP_isom_2"/>
    <property type="match status" value="1"/>
</dbReference>
<dbReference type="PANTHER" id="PTHR43665">
    <property type="entry name" value="ISOPENTENYL-DIPHOSPHATE DELTA-ISOMERASE"/>
    <property type="match status" value="1"/>
</dbReference>
<dbReference type="PANTHER" id="PTHR43665:SF1">
    <property type="entry name" value="ISOPENTENYL-DIPHOSPHATE DELTA-ISOMERASE"/>
    <property type="match status" value="1"/>
</dbReference>
<dbReference type="Pfam" id="PF01070">
    <property type="entry name" value="FMN_dh"/>
    <property type="match status" value="1"/>
</dbReference>
<dbReference type="PIRSF" id="PIRSF003314">
    <property type="entry name" value="IPP_isomerase"/>
    <property type="match status" value="1"/>
</dbReference>
<dbReference type="SMART" id="SM01240">
    <property type="entry name" value="IMPDH"/>
    <property type="match status" value="1"/>
</dbReference>
<dbReference type="SUPFAM" id="SSF51395">
    <property type="entry name" value="FMN-linked oxidoreductases"/>
    <property type="match status" value="1"/>
</dbReference>
<accession>C1EMZ6</accession>
<proteinExistence type="inferred from homology"/>
<name>IDI2_BACC3</name>
<sequence length="349" mass="38201">MVRAKRKLDHIEYALSTGQSRTHGFHDIDFVHQSLPNSSYETITCETKIGELSLSSPIFINAMTGGGGEKTLHINEQLAYVAKHHNLAMAVGSQMAALKDESEAASYKIIRKVNPNGIFFANLGSEATVEQAELAVDMIEANALQIHLNVIQELTMPEGDRDFTGVLQRIEKIVLNSKVPVIVKEVGFGMSKETMQQLASVGVTAIDIGGQGGTNFAAVENERRQRMLSYFNNWGIQTATSIIEATSTNNNLSFIASGGIQTALDVAKAIALGANTTAFAGYFLRILMEDGIEKLVDEIDLLHTDLKFIMTALGAKTIEELQSVPLVVKGETYHWLTQRGIDTTHYSRR</sequence>
<evidence type="ECO:0000255" key="1">
    <source>
        <dbReference type="HAMAP-Rule" id="MF_00354"/>
    </source>
</evidence>
<reference key="1">
    <citation type="submission" date="2009-02" db="EMBL/GenBank/DDBJ databases">
        <title>Genome sequence of Bacillus cereus 03BB102.</title>
        <authorList>
            <person name="Dodson R.J."/>
            <person name="Jackson P."/>
            <person name="Munk A.C."/>
            <person name="Brettin T."/>
            <person name="Bruce D."/>
            <person name="Detter C."/>
            <person name="Tapia R."/>
            <person name="Han C."/>
            <person name="Sutton G."/>
            <person name="Sims D."/>
        </authorList>
    </citation>
    <scope>NUCLEOTIDE SEQUENCE [LARGE SCALE GENOMIC DNA]</scope>
    <source>
        <strain>03BB102</strain>
    </source>
</reference>